<name>ILVD_CAMHC</name>
<gene>
    <name evidence="1" type="primary">ilvD</name>
    <name type="ordered locus">CHAB381_1769</name>
</gene>
<keyword id="KW-0001">2Fe-2S</keyword>
<keyword id="KW-0028">Amino-acid biosynthesis</keyword>
<keyword id="KW-0100">Branched-chain amino acid biosynthesis</keyword>
<keyword id="KW-0408">Iron</keyword>
<keyword id="KW-0411">Iron-sulfur</keyword>
<keyword id="KW-0456">Lyase</keyword>
<keyword id="KW-0460">Magnesium</keyword>
<keyword id="KW-0479">Metal-binding</keyword>
<keyword id="KW-1185">Reference proteome</keyword>
<sequence length="553" mass="59425">MRSDVIKKGYIRAPHRSLLRATGLKDDDFKKPFIGVCNSFAEIIPGHFFLNKFAKIIKDEIRKNGCVPFEFNCIGVDDGIAMGHDGMLYSLPSREIIANSVETMMNAHKLDALICIPNCDKIVPGMIMGALRVNVPTIFISGGPMAAGRGKNGEALDLNSTFEAVGAYEVKKINKKELHDIECAACPGAGSCSGMFTANSMNTLCEAMGIALKGNGTILAMTKNRKKLAKKAARRICEIALDDKFKIRNIINKKAVENAMVVDMAMGGSSNTILHMLAISREAGCALDIKELNEISKKTPHIAKIAPSKPEIHMQDVHNAGGINAIMNEVKDLLHLDNLTVTGETLGERIKGAKIKDEDVIHKVENAYSKVGGLAILFGNLAEQGCVIKAAGIIGSRKFSGKAICFNSQDEAIEGISGGKVKKGDVVVIRYEGPKGGPGMQEMLSPTSLIVGRGLGADVALITDGRFSGATRGLCIGHVSPEAAEGGMIGLLKDGDIIDIDVDNFSINVRLSEDEIAERKKEFKYGGKKVQSRWLRQYQKLVTNASNGAILEA</sequence>
<feature type="chain" id="PRO_1000000971" description="Dihydroxy-acid dehydratase">
    <location>
        <begin position="1"/>
        <end position="553"/>
    </location>
</feature>
<feature type="active site" description="Proton acceptor" evidence="1">
    <location>
        <position position="468"/>
    </location>
</feature>
<feature type="binding site" evidence="1">
    <location>
        <position position="78"/>
    </location>
    <ligand>
        <name>Mg(2+)</name>
        <dbReference type="ChEBI" id="CHEBI:18420"/>
    </ligand>
</feature>
<feature type="binding site" evidence="1">
    <location>
        <position position="119"/>
    </location>
    <ligand>
        <name>[2Fe-2S] cluster</name>
        <dbReference type="ChEBI" id="CHEBI:190135"/>
    </ligand>
</feature>
<feature type="binding site" evidence="1">
    <location>
        <position position="120"/>
    </location>
    <ligand>
        <name>Mg(2+)</name>
        <dbReference type="ChEBI" id="CHEBI:18420"/>
    </ligand>
</feature>
<feature type="binding site" description="via carbamate group" evidence="1">
    <location>
        <position position="121"/>
    </location>
    <ligand>
        <name>Mg(2+)</name>
        <dbReference type="ChEBI" id="CHEBI:18420"/>
    </ligand>
</feature>
<feature type="binding site" evidence="1">
    <location>
        <position position="192"/>
    </location>
    <ligand>
        <name>[2Fe-2S] cluster</name>
        <dbReference type="ChEBI" id="CHEBI:190135"/>
    </ligand>
</feature>
<feature type="binding site" evidence="1">
    <location>
        <position position="442"/>
    </location>
    <ligand>
        <name>Mg(2+)</name>
        <dbReference type="ChEBI" id="CHEBI:18420"/>
    </ligand>
</feature>
<feature type="modified residue" description="N6-carboxylysine" evidence="1">
    <location>
        <position position="121"/>
    </location>
</feature>
<protein>
    <recommendedName>
        <fullName evidence="1">Dihydroxy-acid dehydratase</fullName>
        <shortName evidence="1">DAD</shortName>
        <ecNumber evidence="1">4.2.1.9</ecNumber>
    </recommendedName>
</protein>
<proteinExistence type="inferred from homology"/>
<evidence type="ECO:0000255" key="1">
    <source>
        <dbReference type="HAMAP-Rule" id="MF_00012"/>
    </source>
</evidence>
<organism>
    <name type="scientific">Campylobacter hominis (strain ATCC BAA-381 / DSM 21671 / CCUG 45161 / LMG 19568 / NCTC 13146 / CH001A)</name>
    <dbReference type="NCBI Taxonomy" id="360107"/>
    <lineage>
        <taxon>Bacteria</taxon>
        <taxon>Pseudomonadati</taxon>
        <taxon>Campylobacterota</taxon>
        <taxon>Epsilonproteobacteria</taxon>
        <taxon>Campylobacterales</taxon>
        <taxon>Campylobacteraceae</taxon>
        <taxon>Campylobacter</taxon>
    </lineage>
</organism>
<dbReference type="EC" id="4.2.1.9" evidence="1"/>
<dbReference type="EMBL" id="CP000776">
    <property type="protein sequence ID" value="ABS51486.1"/>
    <property type="molecule type" value="Genomic_DNA"/>
</dbReference>
<dbReference type="RefSeq" id="WP_012109587.1">
    <property type="nucleotide sequence ID" value="NC_009714.1"/>
</dbReference>
<dbReference type="SMR" id="A7I439"/>
<dbReference type="STRING" id="360107.CHAB381_1769"/>
<dbReference type="KEGG" id="cha:CHAB381_1769"/>
<dbReference type="eggNOG" id="COG0129">
    <property type="taxonomic scope" value="Bacteria"/>
</dbReference>
<dbReference type="HOGENOM" id="CLU_014271_4_2_7"/>
<dbReference type="OrthoDB" id="9807077at2"/>
<dbReference type="UniPathway" id="UPA00047">
    <property type="reaction ID" value="UER00057"/>
</dbReference>
<dbReference type="UniPathway" id="UPA00049">
    <property type="reaction ID" value="UER00061"/>
</dbReference>
<dbReference type="Proteomes" id="UP000002407">
    <property type="component" value="Chromosome"/>
</dbReference>
<dbReference type="GO" id="GO:0005829">
    <property type="term" value="C:cytosol"/>
    <property type="evidence" value="ECO:0007669"/>
    <property type="project" value="TreeGrafter"/>
</dbReference>
<dbReference type="GO" id="GO:0051537">
    <property type="term" value="F:2 iron, 2 sulfur cluster binding"/>
    <property type="evidence" value="ECO:0007669"/>
    <property type="project" value="UniProtKB-UniRule"/>
</dbReference>
<dbReference type="GO" id="GO:0004160">
    <property type="term" value="F:dihydroxy-acid dehydratase activity"/>
    <property type="evidence" value="ECO:0007669"/>
    <property type="project" value="UniProtKB-UniRule"/>
</dbReference>
<dbReference type="GO" id="GO:0000287">
    <property type="term" value="F:magnesium ion binding"/>
    <property type="evidence" value="ECO:0007669"/>
    <property type="project" value="UniProtKB-UniRule"/>
</dbReference>
<dbReference type="GO" id="GO:0009097">
    <property type="term" value="P:isoleucine biosynthetic process"/>
    <property type="evidence" value="ECO:0007669"/>
    <property type="project" value="UniProtKB-UniRule"/>
</dbReference>
<dbReference type="GO" id="GO:0009099">
    <property type="term" value="P:L-valine biosynthetic process"/>
    <property type="evidence" value="ECO:0007669"/>
    <property type="project" value="UniProtKB-UniRule"/>
</dbReference>
<dbReference type="FunFam" id="3.50.30.80:FF:000001">
    <property type="entry name" value="Dihydroxy-acid dehydratase"/>
    <property type="match status" value="1"/>
</dbReference>
<dbReference type="Gene3D" id="3.50.30.80">
    <property type="entry name" value="IlvD/EDD C-terminal domain-like"/>
    <property type="match status" value="1"/>
</dbReference>
<dbReference type="HAMAP" id="MF_00012">
    <property type="entry name" value="IlvD"/>
    <property type="match status" value="1"/>
</dbReference>
<dbReference type="InterPro" id="IPR042096">
    <property type="entry name" value="Dihydro-acid_dehy_C"/>
</dbReference>
<dbReference type="InterPro" id="IPR004404">
    <property type="entry name" value="DihydroxyA_deHydtase"/>
</dbReference>
<dbReference type="InterPro" id="IPR020558">
    <property type="entry name" value="DiOHA_6PGluconate_deHydtase_CS"/>
</dbReference>
<dbReference type="InterPro" id="IPR056740">
    <property type="entry name" value="ILV_EDD_C"/>
</dbReference>
<dbReference type="InterPro" id="IPR000581">
    <property type="entry name" value="ILV_EDD_N"/>
</dbReference>
<dbReference type="InterPro" id="IPR037237">
    <property type="entry name" value="IlvD/EDD_N"/>
</dbReference>
<dbReference type="NCBIfam" id="TIGR00110">
    <property type="entry name" value="ilvD"/>
    <property type="match status" value="1"/>
</dbReference>
<dbReference type="NCBIfam" id="NF002068">
    <property type="entry name" value="PRK00911.1"/>
    <property type="match status" value="1"/>
</dbReference>
<dbReference type="PANTHER" id="PTHR43661">
    <property type="entry name" value="D-XYLONATE DEHYDRATASE"/>
    <property type="match status" value="1"/>
</dbReference>
<dbReference type="PANTHER" id="PTHR43661:SF3">
    <property type="entry name" value="D-XYLONATE DEHYDRATASE YAGF-RELATED"/>
    <property type="match status" value="1"/>
</dbReference>
<dbReference type="Pfam" id="PF24877">
    <property type="entry name" value="ILV_EDD_C"/>
    <property type="match status" value="1"/>
</dbReference>
<dbReference type="Pfam" id="PF00920">
    <property type="entry name" value="ILVD_EDD_N"/>
    <property type="match status" value="1"/>
</dbReference>
<dbReference type="SUPFAM" id="SSF143975">
    <property type="entry name" value="IlvD/EDD N-terminal domain-like"/>
    <property type="match status" value="1"/>
</dbReference>
<dbReference type="SUPFAM" id="SSF52016">
    <property type="entry name" value="LeuD/IlvD-like"/>
    <property type="match status" value="1"/>
</dbReference>
<dbReference type="PROSITE" id="PS00886">
    <property type="entry name" value="ILVD_EDD_1"/>
    <property type="match status" value="1"/>
</dbReference>
<dbReference type="PROSITE" id="PS00887">
    <property type="entry name" value="ILVD_EDD_2"/>
    <property type="match status" value="1"/>
</dbReference>
<accession>A7I439</accession>
<comment type="function">
    <text evidence="1">Functions in the biosynthesis of branched-chain amino acids. Catalyzes the dehydration of (2R,3R)-2,3-dihydroxy-3-methylpentanoate (2,3-dihydroxy-3-methylvalerate) into 2-oxo-3-methylpentanoate (2-oxo-3-methylvalerate) and of (2R)-2,3-dihydroxy-3-methylbutanoate (2,3-dihydroxyisovalerate) into 2-oxo-3-methylbutanoate (2-oxoisovalerate), the penultimate precursor to L-isoleucine and L-valine, respectively.</text>
</comment>
<comment type="catalytic activity">
    <reaction evidence="1">
        <text>(2R)-2,3-dihydroxy-3-methylbutanoate = 3-methyl-2-oxobutanoate + H2O</text>
        <dbReference type="Rhea" id="RHEA:24809"/>
        <dbReference type="ChEBI" id="CHEBI:11851"/>
        <dbReference type="ChEBI" id="CHEBI:15377"/>
        <dbReference type="ChEBI" id="CHEBI:49072"/>
        <dbReference type="EC" id="4.2.1.9"/>
    </reaction>
    <physiologicalReaction direction="left-to-right" evidence="1">
        <dbReference type="Rhea" id="RHEA:24810"/>
    </physiologicalReaction>
</comment>
<comment type="catalytic activity">
    <reaction evidence="1">
        <text>(2R,3R)-2,3-dihydroxy-3-methylpentanoate = (S)-3-methyl-2-oxopentanoate + H2O</text>
        <dbReference type="Rhea" id="RHEA:27694"/>
        <dbReference type="ChEBI" id="CHEBI:15377"/>
        <dbReference type="ChEBI" id="CHEBI:35146"/>
        <dbReference type="ChEBI" id="CHEBI:49258"/>
        <dbReference type="EC" id="4.2.1.9"/>
    </reaction>
    <physiologicalReaction direction="left-to-right" evidence="1">
        <dbReference type="Rhea" id="RHEA:27695"/>
    </physiologicalReaction>
</comment>
<comment type="cofactor">
    <cofactor evidence="1">
        <name>[2Fe-2S] cluster</name>
        <dbReference type="ChEBI" id="CHEBI:190135"/>
    </cofactor>
    <text evidence="1">Binds 1 [2Fe-2S] cluster per subunit. This cluster acts as a Lewis acid cofactor.</text>
</comment>
<comment type="cofactor">
    <cofactor evidence="1">
        <name>Mg(2+)</name>
        <dbReference type="ChEBI" id="CHEBI:18420"/>
    </cofactor>
</comment>
<comment type="pathway">
    <text evidence="1">Amino-acid biosynthesis; L-isoleucine biosynthesis; L-isoleucine from 2-oxobutanoate: step 3/4.</text>
</comment>
<comment type="pathway">
    <text evidence="1">Amino-acid biosynthesis; L-valine biosynthesis; L-valine from pyruvate: step 3/4.</text>
</comment>
<comment type="subunit">
    <text evidence="1">Homodimer.</text>
</comment>
<comment type="similarity">
    <text evidence="1">Belongs to the IlvD/Edd family.</text>
</comment>
<reference key="1">
    <citation type="submission" date="2007-07" db="EMBL/GenBank/DDBJ databases">
        <title>Complete genome sequence of Campylobacter hominis ATCC BAA-381, a commensal isolated from the human gastrointestinal tract.</title>
        <authorList>
            <person name="Fouts D.E."/>
            <person name="Mongodin E.F."/>
            <person name="Puiu D."/>
            <person name="Sebastian Y."/>
            <person name="Miller W.G."/>
            <person name="Mandrell R.E."/>
            <person name="Nelson K.E."/>
        </authorList>
    </citation>
    <scope>NUCLEOTIDE SEQUENCE [LARGE SCALE GENOMIC DNA]</scope>
    <source>
        <strain>ATCC BAA-381 / DSM 21671 / CCUG 45161 / LMG 19568 / NCTC 13146 / CH001A</strain>
    </source>
</reference>